<feature type="chain" id="PRO_0000137812" description="Argininosuccinate lyase 1">
    <location>
        <begin position="1"/>
        <end position="467"/>
    </location>
</feature>
<sequence>MADGSSETKSSNQMWGGRFASGPDAIMEEINASIGFDKKLYAQDIRGSIAHATMLAHQGIISAEDKDKIVHGLDTILSEIDSGAFEFSRRLEDIHMNIEARLAALIGPAAGRLHTARSRNDQVALDFRLWVKEELQKTEKALTGLIAAFLDRAEEHAETVMPGFTHLQTAQPVTFGHHCMAYVEMFGRDRARVRHAIEHMDESPIGAAALAGTGFPIDRHMTAKALGFREPTRNSIDTVSDRDFALEFLSIAAIAATHLSRLAEEIVIWSTPQFGFIRLSDAFSTGSSIMPQKKNPDAAELVRAKTGRVNGSLVALLTVMKGLPLAYSKDMQEDKEQVFDAAESLELAIAAMTGMIRDVTIRADRMKAAAGSGYSTATDLADWLVREAGLPFRDAHHVTGRVVALAEQKGCDLADLPLAELQAINSAITDKVYGVLTVEASVASRTSFGGTAPSEVRKQIAWWRARN</sequence>
<organism>
    <name type="scientific">Rhizobium meliloti (strain 1021)</name>
    <name type="common">Ensifer meliloti</name>
    <name type="synonym">Sinorhizobium meliloti</name>
    <dbReference type="NCBI Taxonomy" id="266834"/>
    <lineage>
        <taxon>Bacteria</taxon>
        <taxon>Pseudomonadati</taxon>
        <taxon>Pseudomonadota</taxon>
        <taxon>Alphaproteobacteria</taxon>
        <taxon>Hyphomicrobiales</taxon>
        <taxon>Rhizobiaceae</taxon>
        <taxon>Sinorhizobium/Ensifer group</taxon>
        <taxon>Sinorhizobium</taxon>
    </lineage>
</organism>
<accession>Q92MH1</accession>
<proteinExistence type="inferred from homology"/>
<dbReference type="EC" id="4.3.2.1" evidence="1"/>
<dbReference type="EMBL" id="AL591688">
    <property type="protein sequence ID" value="CAC47226.1"/>
    <property type="molecule type" value="Genomic_DNA"/>
</dbReference>
<dbReference type="RefSeq" id="NP_386753.1">
    <property type="nucleotide sequence ID" value="NC_003047.1"/>
</dbReference>
<dbReference type="RefSeq" id="WP_010970100.1">
    <property type="nucleotide sequence ID" value="NC_003047.1"/>
</dbReference>
<dbReference type="SMR" id="Q92MH1"/>
<dbReference type="EnsemblBacteria" id="CAC47226">
    <property type="protein sequence ID" value="CAC47226"/>
    <property type="gene ID" value="SMc00725"/>
</dbReference>
<dbReference type="KEGG" id="sme:SMc00725"/>
<dbReference type="PATRIC" id="fig|266834.11.peg.4146"/>
<dbReference type="eggNOG" id="COG0165">
    <property type="taxonomic scope" value="Bacteria"/>
</dbReference>
<dbReference type="HOGENOM" id="CLU_027272_2_3_5"/>
<dbReference type="OrthoDB" id="9769623at2"/>
<dbReference type="UniPathway" id="UPA00068">
    <property type="reaction ID" value="UER00114"/>
</dbReference>
<dbReference type="Proteomes" id="UP000001976">
    <property type="component" value="Chromosome"/>
</dbReference>
<dbReference type="GO" id="GO:0005829">
    <property type="term" value="C:cytosol"/>
    <property type="evidence" value="ECO:0007669"/>
    <property type="project" value="TreeGrafter"/>
</dbReference>
<dbReference type="GO" id="GO:0004056">
    <property type="term" value="F:argininosuccinate lyase activity"/>
    <property type="evidence" value="ECO:0007669"/>
    <property type="project" value="UniProtKB-UniRule"/>
</dbReference>
<dbReference type="GO" id="GO:0042450">
    <property type="term" value="P:arginine biosynthetic process via ornithine"/>
    <property type="evidence" value="ECO:0007669"/>
    <property type="project" value="InterPro"/>
</dbReference>
<dbReference type="GO" id="GO:0006526">
    <property type="term" value="P:L-arginine biosynthetic process"/>
    <property type="evidence" value="ECO:0007669"/>
    <property type="project" value="UniProtKB-UniRule"/>
</dbReference>
<dbReference type="CDD" id="cd01359">
    <property type="entry name" value="Argininosuccinate_lyase"/>
    <property type="match status" value="1"/>
</dbReference>
<dbReference type="FunFam" id="1.10.275.10:FF:000002">
    <property type="entry name" value="Argininosuccinate lyase"/>
    <property type="match status" value="1"/>
</dbReference>
<dbReference type="FunFam" id="1.10.40.30:FF:000001">
    <property type="entry name" value="Argininosuccinate lyase"/>
    <property type="match status" value="1"/>
</dbReference>
<dbReference type="FunFam" id="1.20.200.10:FF:000015">
    <property type="entry name" value="argininosuccinate lyase isoform X2"/>
    <property type="match status" value="1"/>
</dbReference>
<dbReference type="Gene3D" id="1.10.40.30">
    <property type="entry name" value="Fumarase/aspartase (C-terminal domain)"/>
    <property type="match status" value="1"/>
</dbReference>
<dbReference type="Gene3D" id="1.20.200.10">
    <property type="entry name" value="Fumarase/aspartase (Central domain)"/>
    <property type="match status" value="1"/>
</dbReference>
<dbReference type="Gene3D" id="1.10.275.10">
    <property type="entry name" value="Fumarase/aspartase (N-terminal domain)"/>
    <property type="match status" value="1"/>
</dbReference>
<dbReference type="HAMAP" id="MF_00006">
    <property type="entry name" value="Arg_succ_lyase"/>
    <property type="match status" value="1"/>
</dbReference>
<dbReference type="InterPro" id="IPR029419">
    <property type="entry name" value="Arg_succ_lyase_C"/>
</dbReference>
<dbReference type="InterPro" id="IPR009049">
    <property type="entry name" value="Argininosuccinate_lyase"/>
</dbReference>
<dbReference type="InterPro" id="IPR024083">
    <property type="entry name" value="Fumarase/histidase_N"/>
</dbReference>
<dbReference type="InterPro" id="IPR020557">
    <property type="entry name" value="Fumarate_lyase_CS"/>
</dbReference>
<dbReference type="InterPro" id="IPR000362">
    <property type="entry name" value="Fumarate_lyase_fam"/>
</dbReference>
<dbReference type="InterPro" id="IPR022761">
    <property type="entry name" value="Fumarate_lyase_N"/>
</dbReference>
<dbReference type="InterPro" id="IPR008948">
    <property type="entry name" value="L-Aspartase-like"/>
</dbReference>
<dbReference type="NCBIfam" id="TIGR00838">
    <property type="entry name" value="argH"/>
    <property type="match status" value="1"/>
</dbReference>
<dbReference type="PANTHER" id="PTHR43814">
    <property type="entry name" value="ARGININOSUCCINATE LYASE"/>
    <property type="match status" value="1"/>
</dbReference>
<dbReference type="PANTHER" id="PTHR43814:SF1">
    <property type="entry name" value="ARGININOSUCCINATE LYASE"/>
    <property type="match status" value="1"/>
</dbReference>
<dbReference type="Pfam" id="PF14698">
    <property type="entry name" value="ASL_C2"/>
    <property type="match status" value="1"/>
</dbReference>
<dbReference type="Pfam" id="PF00206">
    <property type="entry name" value="Lyase_1"/>
    <property type="match status" value="1"/>
</dbReference>
<dbReference type="PRINTS" id="PR00145">
    <property type="entry name" value="ARGSUCLYASE"/>
</dbReference>
<dbReference type="PRINTS" id="PR00149">
    <property type="entry name" value="FUMRATELYASE"/>
</dbReference>
<dbReference type="SUPFAM" id="SSF48557">
    <property type="entry name" value="L-aspartase-like"/>
    <property type="match status" value="1"/>
</dbReference>
<dbReference type="PROSITE" id="PS00163">
    <property type="entry name" value="FUMARATE_LYASES"/>
    <property type="match status" value="1"/>
</dbReference>
<reference key="1">
    <citation type="journal article" date="2001" name="Proc. Natl. Acad. Sci. U.S.A.">
        <title>Analysis of the chromosome sequence of the legume symbiont Sinorhizobium meliloti strain 1021.</title>
        <authorList>
            <person name="Capela D."/>
            <person name="Barloy-Hubler F."/>
            <person name="Gouzy J."/>
            <person name="Bothe G."/>
            <person name="Ampe F."/>
            <person name="Batut J."/>
            <person name="Boistard P."/>
            <person name="Becker A."/>
            <person name="Boutry M."/>
            <person name="Cadieu E."/>
            <person name="Dreano S."/>
            <person name="Gloux S."/>
            <person name="Godrie T."/>
            <person name="Goffeau A."/>
            <person name="Kahn D."/>
            <person name="Kiss E."/>
            <person name="Lelaure V."/>
            <person name="Masuy D."/>
            <person name="Pohl T."/>
            <person name="Portetelle D."/>
            <person name="Puehler A."/>
            <person name="Purnelle B."/>
            <person name="Ramsperger U."/>
            <person name="Renard C."/>
            <person name="Thebault P."/>
            <person name="Vandenbol M."/>
            <person name="Weidner S."/>
            <person name="Galibert F."/>
        </authorList>
    </citation>
    <scope>NUCLEOTIDE SEQUENCE [LARGE SCALE GENOMIC DNA]</scope>
    <source>
        <strain>1021</strain>
    </source>
</reference>
<reference key="2">
    <citation type="journal article" date="2001" name="Science">
        <title>The composite genome of the legume symbiont Sinorhizobium meliloti.</title>
        <authorList>
            <person name="Galibert F."/>
            <person name="Finan T.M."/>
            <person name="Long S.R."/>
            <person name="Puehler A."/>
            <person name="Abola P."/>
            <person name="Ampe F."/>
            <person name="Barloy-Hubler F."/>
            <person name="Barnett M.J."/>
            <person name="Becker A."/>
            <person name="Boistard P."/>
            <person name="Bothe G."/>
            <person name="Boutry M."/>
            <person name="Bowser L."/>
            <person name="Buhrmester J."/>
            <person name="Cadieu E."/>
            <person name="Capela D."/>
            <person name="Chain P."/>
            <person name="Cowie A."/>
            <person name="Davis R.W."/>
            <person name="Dreano S."/>
            <person name="Federspiel N.A."/>
            <person name="Fisher R.F."/>
            <person name="Gloux S."/>
            <person name="Godrie T."/>
            <person name="Goffeau A."/>
            <person name="Golding B."/>
            <person name="Gouzy J."/>
            <person name="Gurjal M."/>
            <person name="Hernandez-Lucas I."/>
            <person name="Hong A."/>
            <person name="Huizar L."/>
            <person name="Hyman R.W."/>
            <person name="Jones T."/>
            <person name="Kahn D."/>
            <person name="Kahn M.L."/>
            <person name="Kalman S."/>
            <person name="Keating D.H."/>
            <person name="Kiss E."/>
            <person name="Komp C."/>
            <person name="Lelaure V."/>
            <person name="Masuy D."/>
            <person name="Palm C."/>
            <person name="Peck M.C."/>
            <person name="Pohl T.M."/>
            <person name="Portetelle D."/>
            <person name="Purnelle B."/>
            <person name="Ramsperger U."/>
            <person name="Surzycki R."/>
            <person name="Thebault P."/>
            <person name="Vandenbol M."/>
            <person name="Vorhoelter F.J."/>
            <person name="Weidner S."/>
            <person name="Wells D.H."/>
            <person name="Wong K."/>
            <person name="Yeh K.-C."/>
            <person name="Batut J."/>
        </authorList>
    </citation>
    <scope>NUCLEOTIDE SEQUENCE [LARGE SCALE GENOMIC DNA]</scope>
    <source>
        <strain>1021</strain>
    </source>
</reference>
<gene>
    <name evidence="1" type="primary">argH1</name>
    <name type="ordered locus">R02647</name>
    <name type="ORF">SMc00725</name>
</gene>
<evidence type="ECO:0000255" key="1">
    <source>
        <dbReference type="HAMAP-Rule" id="MF_00006"/>
    </source>
</evidence>
<name>ARLY1_RHIME</name>
<keyword id="KW-0028">Amino-acid biosynthesis</keyword>
<keyword id="KW-0055">Arginine biosynthesis</keyword>
<keyword id="KW-0963">Cytoplasm</keyword>
<keyword id="KW-0456">Lyase</keyword>
<keyword id="KW-1185">Reference proteome</keyword>
<protein>
    <recommendedName>
        <fullName evidence="1">Argininosuccinate lyase 1</fullName>
        <shortName evidence="1">ASAL 1</shortName>
        <ecNumber evidence="1">4.3.2.1</ecNumber>
    </recommendedName>
    <alternativeName>
        <fullName evidence="1">Arginosuccinase 1</fullName>
    </alternativeName>
</protein>
<comment type="catalytic activity">
    <reaction evidence="1">
        <text>2-(N(omega)-L-arginino)succinate = fumarate + L-arginine</text>
        <dbReference type="Rhea" id="RHEA:24020"/>
        <dbReference type="ChEBI" id="CHEBI:29806"/>
        <dbReference type="ChEBI" id="CHEBI:32682"/>
        <dbReference type="ChEBI" id="CHEBI:57472"/>
        <dbReference type="EC" id="4.3.2.1"/>
    </reaction>
</comment>
<comment type="pathway">
    <text evidence="1">Amino-acid biosynthesis; L-arginine biosynthesis; L-arginine from L-ornithine and carbamoyl phosphate: step 3/3.</text>
</comment>
<comment type="subcellular location">
    <subcellularLocation>
        <location evidence="1">Cytoplasm</location>
    </subcellularLocation>
</comment>
<comment type="similarity">
    <text evidence="1">Belongs to the lyase 1 family. Argininosuccinate lyase subfamily.</text>
</comment>